<comment type="similarity">
    <text evidence="1">Belongs to the UPF0349 family.</text>
</comment>
<proteinExistence type="inferred from homology"/>
<sequence>MNPIVEFCLSNMAKGGDYVFNQLENDPDVDVLEYGCLTHCGICSAGLYALVNGDIVEGDSPEELLQNIYAHIKETWIF</sequence>
<accession>Q7A1C9</accession>
<feature type="chain" id="PRO_0000165899" description="UPF0349 protein MW0821">
    <location>
        <begin position="1"/>
        <end position="78"/>
    </location>
</feature>
<reference key="1">
    <citation type="journal article" date="2002" name="Lancet">
        <title>Genome and virulence determinants of high virulence community-acquired MRSA.</title>
        <authorList>
            <person name="Baba T."/>
            <person name="Takeuchi F."/>
            <person name="Kuroda M."/>
            <person name="Yuzawa H."/>
            <person name="Aoki K."/>
            <person name="Oguchi A."/>
            <person name="Nagai Y."/>
            <person name="Iwama N."/>
            <person name="Asano K."/>
            <person name="Naimi T."/>
            <person name="Kuroda H."/>
            <person name="Cui L."/>
            <person name="Yamamoto K."/>
            <person name="Hiramatsu K."/>
        </authorList>
    </citation>
    <scope>NUCLEOTIDE SEQUENCE [LARGE SCALE GENOMIC DNA]</scope>
    <source>
        <strain>MW2</strain>
    </source>
</reference>
<protein>
    <recommendedName>
        <fullName evidence="1">UPF0349 protein MW0821</fullName>
    </recommendedName>
</protein>
<gene>
    <name type="ordered locus">MW0821</name>
</gene>
<name>Y821_STAAW</name>
<organism>
    <name type="scientific">Staphylococcus aureus (strain MW2)</name>
    <dbReference type="NCBI Taxonomy" id="196620"/>
    <lineage>
        <taxon>Bacteria</taxon>
        <taxon>Bacillati</taxon>
        <taxon>Bacillota</taxon>
        <taxon>Bacilli</taxon>
        <taxon>Bacillales</taxon>
        <taxon>Staphylococcaceae</taxon>
        <taxon>Staphylococcus</taxon>
    </lineage>
</organism>
<dbReference type="EMBL" id="BA000033">
    <property type="protein sequence ID" value="BAB94686.1"/>
    <property type="molecule type" value="Genomic_DNA"/>
</dbReference>
<dbReference type="RefSeq" id="WP_001068337.1">
    <property type="nucleotide sequence ID" value="NC_003923.1"/>
</dbReference>
<dbReference type="SMR" id="Q7A1C9"/>
<dbReference type="KEGG" id="sam:MW0821"/>
<dbReference type="HOGENOM" id="CLU_182025_0_0_9"/>
<dbReference type="HAMAP" id="MF_01542">
    <property type="entry name" value="UPF0349"/>
    <property type="match status" value="1"/>
</dbReference>
<dbReference type="InterPro" id="IPR009910">
    <property type="entry name" value="DUF1450"/>
</dbReference>
<dbReference type="InterPro" id="IPR022916">
    <property type="entry name" value="UPF0349"/>
</dbReference>
<dbReference type="NCBIfam" id="NF010190">
    <property type="entry name" value="PRK13669.1"/>
    <property type="match status" value="1"/>
</dbReference>
<dbReference type="Pfam" id="PF07293">
    <property type="entry name" value="DUF1450"/>
    <property type="match status" value="1"/>
</dbReference>
<evidence type="ECO:0000255" key="1">
    <source>
        <dbReference type="HAMAP-Rule" id="MF_01542"/>
    </source>
</evidence>